<organism>
    <name type="scientific">Escherichia coli O7:K1 (strain IAI39 / ExPEC)</name>
    <dbReference type="NCBI Taxonomy" id="585057"/>
    <lineage>
        <taxon>Bacteria</taxon>
        <taxon>Pseudomonadati</taxon>
        <taxon>Pseudomonadota</taxon>
        <taxon>Gammaproteobacteria</taxon>
        <taxon>Enterobacterales</taxon>
        <taxon>Enterobacteriaceae</taxon>
        <taxon>Escherichia</taxon>
    </lineage>
</organism>
<protein>
    <recommendedName>
        <fullName evidence="1">Succinylglutamate desuccinylase</fullName>
        <ecNumber evidence="1">3.5.1.96</ecNumber>
    </recommendedName>
</protein>
<keyword id="KW-0056">Arginine metabolism</keyword>
<keyword id="KW-0378">Hydrolase</keyword>
<keyword id="KW-0479">Metal-binding</keyword>
<keyword id="KW-0862">Zinc</keyword>
<evidence type="ECO:0000255" key="1">
    <source>
        <dbReference type="HAMAP-Rule" id="MF_00767"/>
    </source>
</evidence>
<gene>
    <name evidence="1" type="primary">astE</name>
    <name type="ordered locus">ECIAI39_1310</name>
</gene>
<proteinExistence type="inferred from homology"/>
<name>ASTE_ECO7I</name>
<dbReference type="EC" id="3.5.1.96" evidence="1"/>
<dbReference type="EMBL" id="CU928164">
    <property type="protein sequence ID" value="CAR17444.1"/>
    <property type="molecule type" value="Genomic_DNA"/>
</dbReference>
<dbReference type="RefSeq" id="WP_000368435.1">
    <property type="nucleotide sequence ID" value="NC_011750.1"/>
</dbReference>
<dbReference type="RefSeq" id="YP_002407318.1">
    <property type="nucleotide sequence ID" value="NC_011750.1"/>
</dbReference>
<dbReference type="SMR" id="B7NT33"/>
<dbReference type="STRING" id="585057.ECIAI39_1310"/>
<dbReference type="KEGG" id="ect:ECIAI39_1310"/>
<dbReference type="PATRIC" id="fig|585057.6.peg.1372"/>
<dbReference type="HOGENOM" id="CLU_071608_0_0_6"/>
<dbReference type="UniPathway" id="UPA00185">
    <property type="reaction ID" value="UER00283"/>
</dbReference>
<dbReference type="Proteomes" id="UP000000749">
    <property type="component" value="Chromosome"/>
</dbReference>
<dbReference type="GO" id="GO:0016788">
    <property type="term" value="F:hydrolase activity, acting on ester bonds"/>
    <property type="evidence" value="ECO:0007669"/>
    <property type="project" value="UniProtKB-UniRule"/>
</dbReference>
<dbReference type="GO" id="GO:0009017">
    <property type="term" value="F:succinylglutamate desuccinylase activity"/>
    <property type="evidence" value="ECO:0007669"/>
    <property type="project" value="UniProtKB-EC"/>
</dbReference>
<dbReference type="GO" id="GO:0008270">
    <property type="term" value="F:zinc ion binding"/>
    <property type="evidence" value="ECO:0007669"/>
    <property type="project" value="UniProtKB-UniRule"/>
</dbReference>
<dbReference type="GO" id="GO:0019544">
    <property type="term" value="P:arginine catabolic process to glutamate"/>
    <property type="evidence" value="ECO:0007669"/>
    <property type="project" value="UniProtKB-UniRule"/>
</dbReference>
<dbReference type="GO" id="GO:0019545">
    <property type="term" value="P:arginine catabolic process to succinate"/>
    <property type="evidence" value="ECO:0007669"/>
    <property type="project" value="UniProtKB-UniRule"/>
</dbReference>
<dbReference type="CDD" id="cd03855">
    <property type="entry name" value="M14_ASTE"/>
    <property type="match status" value="1"/>
</dbReference>
<dbReference type="FunFam" id="3.40.630.10:FF:000017">
    <property type="entry name" value="Succinylglutamate desuccinylase"/>
    <property type="match status" value="1"/>
</dbReference>
<dbReference type="Gene3D" id="3.40.630.10">
    <property type="entry name" value="Zn peptidases"/>
    <property type="match status" value="1"/>
</dbReference>
<dbReference type="HAMAP" id="MF_00767">
    <property type="entry name" value="Arg_catab_AstE"/>
    <property type="match status" value="1"/>
</dbReference>
<dbReference type="InterPro" id="IPR050178">
    <property type="entry name" value="AspA/AstE_fam"/>
</dbReference>
<dbReference type="InterPro" id="IPR055438">
    <property type="entry name" value="AstE_AspA_cat"/>
</dbReference>
<dbReference type="InterPro" id="IPR007036">
    <property type="entry name" value="Aste_AspA_hybrid_dom"/>
</dbReference>
<dbReference type="InterPro" id="IPR016681">
    <property type="entry name" value="SuccinylGlu_desuccinylase"/>
</dbReference>
<dbReference type="NCBIfam" id="TIGR03242">
    <property type="entry name" value="arg_catab_astE"/>
    <property type="match status" value="1"/>
</dbReference>
<dbReference type="NCBIfam" id="NF003706">
    <property type="entry name" value="PRK05324.1"/>
    <property type="match status" value="1"/>
</dbReference>
<dbReference type="PANTHER" id="PTHR15162">
    <property type="entry name" value="ASPARTOACYLASE"/>
    <property type="match status" value="1"/>
</dbReference>
<dbReference type="PANTHER" id="PTHR15162:SF7">
    <property type="entry name" value="SUCCINYLGLUTAMATE DESUCCINYLASE"/>
    <property type="match status" value="1"/>
</dbReference>
<dbReference type="Pfam" id="PF24827">
    <property type="entry name" value="AstE_AspA_cat"/>
    <property type="match status" value="1"/>
</dbReference>
<dbReference type="Pfam" id="PF04952">
    <property type="entry name" value="AstE_AspA_hybrid"/>
    <property type="match status" value="1"/>
</dbReference>
<dbReference type="PIRSF" id="PIRSF017020">
    <property type="entry name" value="AstE"/>
    <property type="match status" value="1"/>
</dbReference>
<dbReference type="SUPFAM" id="SSF53187">
    <property type="entry name" value="Zn-dependent exopeptidases"/>
    <property type="match status" value="1"/>
</dbReference>
<reference key="1">
    <citation type="journal article" date="2009" name="PLoS Genet.">
        <title>Organised genome dynamics in the Escherichia coli species results in highly diverse adaptive paths.</title>
        <authorList>
            <person name="Touchon M."/>
            <person name="Hoede C."/>
            <person name="Tenaillon O."/>
            <person name="Barbe V."/>
            <person name="Baeriswyl S."/>
            <person name="Bidet P."/>
            <person name="Bingen E."/>
            <person name="Bonacorsi S."/>
            <person name="Bouchier C."/>
            <person name="Bouvet O."/>
            <person name="Calteau A."/>
            <person name="Chiapello H."/>
            <person name="Clermont O."/>
            <person name="Cruveiller S."/>
            <person name="Danchin A."/>
            <person name="Diard M."/>
            <person name="Dossat C."/>
            <person name="Karoui M.E."/>
            <person name="Frapy E."/>
            <person name="Garry L."/>
            <person name="Ghigo J.M."/>
            <person name="Gilles A.M."/>
            <person name="Johnson J."/>
            <person name="Le Bouguenec C."/>
            <person name="Lescat M."/>
            <person name="Mangenot S."/>
            <person name="Martinez-Jehanne V."/>
            <person name="Matic I."/>
            <person name="Nassif X."/>
            <person name="Oztas S."/>
            <person name="Petit M.A."/>
            <person name="Pichon C."/>
            <person name="Rouy Z."/>
            <person name="Ruf C.S."/>
            <person name="Schneider D."/>
            <person name="Tourret J."/>
            <person name="Vacherie B."/>
            <person name="Vallenet D."/>
            <person name="Medigue C."/>
            <person name="Rocha E.P.C."/>
            <person name="Denamur E."/>
        </authorList>
    </citation>
    <scope>NUCLEOTIDE SEQUENCE [LARGE SCALE GENOMIC DNA]</scope>
    <source>
        <strain>IAI39 / ExPEC</strain>
    </source>
</reference>
<comment type="function">
    <text evidence="1">Transforms N(2)-succinylglutamate into succinate and glutamate.</text>
</comment>
<comment type="catalytic activity">
    <reaction evidence="1">
        <text>N-succinyl-L-glutamate + H2O = L-glutamate + succinate</text>
        <dbReference type="Rhea" id="RHEA:15169"/>
        <dbReference type="ChEBI" id="CHEBI:15377"/>
        <dbReference type="ChEBI" id="CHEBI:29985"/>
        <dbReference type="ChEBI" id="CHEBI:30031"/>
        <dbReference type="ChEBI" id="CHEBI:58763"/>
        <dbReference type="EC" id="3.5.1.96"/>
    </reaction>
</comment>
<comment type="cofactor">
    <cofactor evidence="1">
        <name>Zn(2+)</name>
        <dbReference type="ChEBI" id="CHEBI:29105"/>
    </cofactor>
    <text evidence="1">Binds 1 zinc ion per subunit.</text>
</comment>
<comment type="pathway">
    <text evidence="1">Amino-acid degradation; L-arginine degradation via AST pathway; L-glutamate and succinate from L-arginine: step 5/5.</text>
</comment>
<comment type="similarity">
    <text evidence="1">Belongs to the AspA/AstE family. Succinylglutamate desuccinylase subfamily.</text>
</comment>
<sequence length="322" mass="35839">MDNFLALILTGKKPVITEREINGVRWRWLGDGVLELTPLTPPQGALVISAGIHGNETAPVEMLDALLGAISHGEIPLRWRLLVILGNPPALKQGKRYCHSDMNRMFGGRWQLFAESGETCRARELEQCLEDFYDQGKESVRWHLDLHTAIRGSLHPQFGVLPQRDIPWDEKFLTWLGAAGLEALVFHQEPGGTFTHFSARHFGALACTLELGKALPFGQNDLRQFAVTASAIAALLSGESVGIVRTPPLRYRVVSQITRHSPSFEMHMANDTLNFMPFEKGTLLAQDGEERFTVTHDVEYVLFPNPLVALGLRAGLMLEKIS</sequence>
<accession>B7NT33</accession>
<feature type="chain" id="PRO_1000133628" description="Succinylglutamate desuccinylase">
    <location>
        <begin position="1"/>
        <end position="322"/>
    </location>
</feature>
<feature type="active site" evidence="1">
    <location>
        <position position="210"/>
    </location>
</feature>
<feature type="binding site" evidence="1">
    <location>
        <position position="53"/>
    </location>
    <ligand>
        <name>Zn(2+)</name>
        <dbReference type="ChEBI" id="CHEBI:29105"/>
    </ligand>
</feature>
<feature type="binding site" evidence="1">
    <location>
        <position position="56"/>
    </location>
    <ligand>
        <name>Zn(2+)</name>
        <dbReference type="ChEBI" id="CHEBI:29105"/>
    </ligand>
</feature>
<feature type="binding site" evidence="1">
    <location>
        <position position="147"/>
    </location>
    <ligand>
        <name>Zn(2+)</name>
        <dbReference type="ChEBI" id="CHEBI:29105"/>
    </ligand>
</feature>